<sequence>MDNLFTFLHEIEDRYARTIFNFHLISCDEIGDIYGLMKERISSEDMFDNIVYNKDIHHAIKKLVYCDIQLTKHIINQNTYPVFNDSSQVKCCHYFDINSDNSNISSRTVEIFEREKSSLVSYIKTTNKKRKVNYGEIKKTVHGGTNANYFSGKKSDEYLSTTVRSNINQPWIKTISKRMRVDIINHSIVTRGKSSILQTIEIIFTNRTCVKIFKDSTMHIILSKDKDEKGCIHMIDKLFYVYYNLFLLFEDIIQNEYFKEVANVVNHVLTATALDEKLFLIKKMAEHDVYGVSNFKIGMFNLTFIKSLDHTVFPSLLDEDSKIKFFKGKKLNIVALRSLEDCINYVTKSENMIEMMKERSTILNSIDIETESVDRLKELLLK</sequence>
<dbReference type="EMBL" id="U94848">
    <property type="protein sequence ID" value="AAB96525.1"/>
    <property type="molecule type" value="Genomic_DNA"/>
</dbReference>
<dbReference type="EMBL" id="AY603355">
    <property type="protein sequence ID" value="AAT10533.1"/>
    <property type="molecule type" value="Genomic_DNA"/>
</dbReference>
<dbReference type="SMR" id="Q76RB3"/>
<dbReference type="Proteomes" id="UP000159908">
    <property type="component" value="Segment"/>
</dbReference>
<dbReference type="Proteomes" id="UP000172909">
    <property type="component" value="Segment"/>
</dbReference>
<dbReference type="InterPro" id="IPR008789">
    <property type="entry name" value="Poxvirus_intermed-TF"/>
</dbReference>
<dbReference type="Pfam" id="PF05718">
    <property type="entry name" value="Pox_int_trans"/>
    <property type="match status" value="1"/>
</dbReference>
<reference key="1">
    <citation type="journal article" date="1998" name="Virology">
        <title>The complete genomic sequence of the modified vaccinia Ankara strain: comparison with other orthopoxviruses.</title>
        <authorList>
            <person name="Antoine G."/>
            <person name="Scheiflinger F."/>
            <person name="Dorner F."/>
            <person name="Falkner F.G."/>
        </authorList>
    </citation>
    <scope>NUCLEOTIDE SEQUENCE [LARGE SCALE GENOMIC DNA]</scope>
</reference>
<reference key="2">
    <citation type="submission" date="2004-04" db="EMBL/GenBank/DDBJ databases">
        <authorList>
            <person name="Esposito J.J."/>
            <person name="Frace M."/>
            <person name="Sammons S.A."/>
            <person name="Olsen-Rasmussen M.S."/>
            <person name="Osborne J."/>
            <person name="Khristova M."/>
            <person name="Wohlhueter R.M."/>
        </authorList>
    </citation>
    <scope>NUCLEOTIDE SEQUENCE [LARGE SCALE GENOMIC DNA]</scope>
    <source>
        <strain>Isolate Acambis 3000</strain>
    </source>
</reference>
<comment type="function">
    <text evidence="1">Acts with RNA polymerase to initiate transcription from intermediate gene promoters.</text>
</comment>
<comment type="subunit">
    <text evidence="1">Heterodimer of a 45 kDa and a 32 kDa subunit.</text>
</comment>
<comment type="similarity">
    <text evidence="2">Belongs to the poxviruses A23 family.</text>
</comment>
<keyword id="KW-0010">Activator</keyword>
<keyword id="KW-0804">Transcription</keyword>
<keyword id="KW-0805">Transcription regulation</keyword>
<feature type="chain" id="PRO_0000099180" description="Intermediate transcription factor 3 large subunit">
    <location>
        <begin position="1"/>
        <end position="382"/>
    </location>
</feature>
<evidence type="ECO:0000250" key="1"/>
<evidence type="ECO:0000305" key="2"/>
<organism>
    <name type="scientific">Vaccinia virus (strain Ankara)</name>
    <name type="common">VACV</name>
    <dbReference type="NCBI Taxonomy" id="126794"/>
    <lineage>
        <taxon>Viruses</taxon>
        <taxon>Varidnaviria</taxon>
        <taxon>Bamfordvirae</taxon>
        <taxon>Nucleocytoviricota</taxon>
        <taxon>Pokkesviricetes</taxon>
        <taxon>Chitovirales</taxon>
        <taxon>Poxviridae</taxon>
        <taxon>Chordopoxvirinae</taxon>
        <taxon>Orthopoxvirus</taxon>
        <taxon>Vaccinia virus</taxon>
    </lineage>
</organism>
<proteinExistence type="inferred from homology"/>
<protein>
    <recommendedName>
        <fullName>Intermediate transcription factor 3 large subunit</fullName>
    </recommendedName>
    <alternativeName>
        <fullName>VITF-3 45 kDa subunit</fullName>
    </alternativeName>
</protein>
<gene>
    <name type="primary">VITF3L</name>
    <name type="ordered locus">MVA134R</name>
    <name type="ordered locus">ACAM3000_MVA_134</name>
</gene>
<name>VTF3L_VACCA</name>
<accession>Q76RB3</accession>
<organismHost>
    <name type="scientific">Homo sapiens</name>
    <name type="common">Human</name>
    <dbReference type="NCBI Taxonomy" id="9606"/>
</organismHost>